<keyword id="KW-1003">Cell membrane</keyword>
<keyword id="KW-1015">Disulfide bond</keyword>
<keyword id="KW-0297">G-protein coupled receptor</keyword>
<keyword id="KW-0325">Glycoprotein</keyword>
<keyword id="KW-0472">Membrane</keyword>
<keyword id="KW-0479">Metal-binding</keyword>
<keyword id="KW-0597">Phosphoprotein</keyword>
<keyword id="KW-1267">Proteomics identification</keyword>
<keyword id="KW-0675">Receptor</keyword>
<keyword id="KW-1185">Reference proteome</keyword>
<keyword id="KW-0807">Transducer</keyword>
<keyword id="KW-0812">Transmembrane</keyword>
<keyword id="KW-1133">Transmembrane helix</keyword>
<keyword id="KW-0862">Zinc</keyword>
<organism>
    <name type="scientific">Homo sapiens</name>
    <name type="common">Human</name>
    <dbReference type="NCBI Taxonomy" id="9606"/>
    <lineage>
        <taxon>Eukaryota</taxon>
        <taxon>Metazoa</taxon>
        <taxon>Chordata</taxon>
        <taxon>Craniata</taxon>
        <taxon>Vertebrata</taxon>
        <taxon>Euteleostomi</taxon>
        <taxon>Mammalia</taxon>
        <taxon>Eutheria</taxon>
        <taxon>Euarchontoglires</taxon>
        <taxon>Primates</taxon>
        <taxon>Haplorrhini</taxon>
        <taxon>Catarrhini</taxon>
        <taxon>Hominidae</taxon>
        <taxon>Homo</taxon>
    </lineage>
</organism>
<proteinExistence type="evidence at protein level"/>
<comment type="function">
    <text evidence="2 7 10 11">Zinc-sensing receptor that can sense changes in extracellular Zn(2+), mediate Zn(2+) signal transmission, and participates in the regulation of numerous physiological processes including glucose homeostasis regulation, gastrointestinal mobility, hormone secretion and cell death (PubMed:18180304). Activation by Zn(2+) in keratinocytes increases the intracellular concentration of Ca(2+) and activates the ERK/MAPK and PI3K/AKT signaling pathways leading to epithelial repair (PubMed:20522546). Plays an essential role in normal wound healing by inducing the production of cytokines including the major inflammatory cytokine IL6 via the PKC/MAPK/CEBPB pathway (By similarity). Regulates adipose tissue metabolism, especially lipolysis, and regulates the function of lipases, such as hormone-sensitive lipase and adipose triglyceride lipase (By similarity). Plays a role in the inhibition of cell death and protects against oxidative, endoplasmic reticulum and mitochondrial stress by inducing secretion of the cytoprotective pigment epithelium-derived growth factor (PEDF) and probably other protective transcripts in a GNA13/RHOA/SRE-dependent manner (PubMed:18180304). Forms dynamic heteroreceptor complexes with HTR1A and GALR1 depending on cell type or specific physiological states, resulting in signaling diversity: HTR1A-GPR39 shows additive increase in signaling along the serum response element (SRE) and NF-kappa-B pathways while GALR1 acts as an antagonist blocking SRE (PubMed:26365466).</text>
</comment>
<comment type="subunit">
    <text evidence="11">Interacts with HTR1A. Interacts with GALR1.</text>
</comment>
<comment type="interaction">
    <interactant intactId="EBI-7165599">
        <id>O43194</id>
    </interactant>
    <interactant intactId="EBI-6570214">
        <id>P08908</id>
        <label>HTR1A</label>
    </interactant>
    <organismsDiffer>false</organismsDiffer>
    <experiments>4</experiments>
</comment>
<comment type="subcellular location">
    <subcellularLocation>
        <location evidence="11">Cell membrane</location>
        <topology>Multi-pass membrane protein</topology>
    </subcellularLocation>
</comment>
<comment type="tissue specificity">
    <text evidence="12">Expressed in many tissues, including the stomach, intestine and hypothalamus.</text>
</comment>
<comment type="similarity">
    <text evidence="4">Belongs to the G-protein coupled receptor 1 family.</text>
</comment>
<evidence type="ECO:0000250" key="1">
    <source>
        <dbReference type="UniProtKB" id="P20789"/>
    </source>
</evidence>
<evidence type="ECO:0000250" key="2">
    <source>
        <dbReference type="UniProtKB" id="Q5U431"/>
    </source>
</evidence>
<evidence type="ECO:0000255" key="3"/>
<evidence type="ECO:0000255" key="4">
    <source>
        <dbReference type="PROSITE-ProRule" id="PRU00521"/>
    </source>
</evidence>
<evidence type="ECO:0000256" key="5">
    <source>
        <dbReference type="SAM" id="MobiDB-lite"/>
    </source>
</evidence>
<evidence type="ECO:0000269" key="6">
    <source>
    </source>
</evidence>
<evidence type="ECO:0000269" key="7">
    <source>
    </source>
</evidence>
<evidence type="ECO:0000269" key="8">
    <source>
    </source>
</evidence>
<evidence type="ECO:0000269" key="9">
    <source>
    </source>
</evidence>
<evidence type="ECO:0000269" key="10">
    <source>
    </source>
</evidence>
<evidence type="ECO:0000269" key="11">
    <source>
    </source>
</evidence>
<evidence type="ECO:0000269" key="12">
    <source>
    </source>
</evidence>
<evidence type="ECO:0007744" key="13">
    <source>
    </source>
</evidence>
<protein>
    <recommendedName>
        <fullName>G-protein coupled receptor 39</fullName>
    </recommendedName>
</protein>
<reference key="1">
    <citation type="journal article" date="1997" name="Genomics">
        <title>Cloning and characterization of two human G protein-coupled receptor genes (GPR38 and GPR39) related to the growth hormone secretagogue and neurotensin receptors.</title>
        <authorList>
            <person name="McKee K.K."/>
            <person name="Tan C.P."/>
            <person name="Palyha O.C."/>
            <person name="Liu J."/>
            <person name="Feighner S.D."/>
            <person name="Hreniuk D.L."/>
            <person name="Smith R.G."/>
            <person name="Howard A.D."/>
            <person name="van der Ploeg L.H.T."/>
        </authorList>
    </citation>
    <scope>NUCLEOTIDE SEQUENCE [MRNA]</scope>
    <scope>TISSUE SPECIFICITY</scope>
    <source>
        <tissue>Brain</tissue>
    </source>
</reference>
<reference key="2">
    <citation type="submission" date="2008-10" db="EMBL/GenBank/DDBJ databases">
        <title>Isolation of cDNA coding for Homo sapiens G protein-coupled receptor 39 (GPR39).</title>
        <authorList>
            <person name="Kaighin V.A."/>
            <person name="Martin A.L."/>
            <person name="Aronstam R.S."/>
        </authorList>
    </citation>
    <scope>NUCLEOTIDE SEQUENCE [MRNA]</scope>
    <source>
        <tissue>Brain</tissue>
    </source>
</reference>
<reference key="3">
    <citation type="journal article" date="2004" name="Nat. Genet.">
        <title>Complete sequencing and characterization of 21,243 full-length human cDNAs.</title>
        <authorList>
            <person name="Ota T."/>
            <person name="Suzuki Y."/>
            <person name="Nishikawa T."/>
            <person name="Otsuki T."/>
            <person name="Sugiyama T."/>
            <person name="Irie R."/>
            <person name="Wakamatsu A."/>
            <person name="Hayashi K."/>
            <person name="Sato H."/>
            <person name="Nagai K."/>
            <person name="Kimura K."/>
            <person name="Makita H."/>
            <person name="Sekine M."/>
            <person name="Obayashi M."/>
            <person name="Nishi T."/>
            <person name="Shibahara T."/>
            <person name="Tanaka T."/>
            <person name="Ishii S."/>
            <person name="Yamamoto J."/>
            <person name="Saito K."/>
            <person name="Kawai Y."/>
            <person name="Isono Y."/>
            <person name="Nakamura Y."/>
            <person name="Nagahari K."/>
            <person name="Murakami K."/>
            <person name="Yasuda T."/>
            <person name="Iwayanagi T."/>
            <person name="Wagatsuma M."/>
            <person name="Shiratori A."/>
            <person name="Sudo H."/>
            <person name="Hosoiri T."/>
            <person name="Kaku Y."/>
            <person name="Kodaira H."/>
            <person name="Kondo H."/>
            <person name="Sugawara M."/>
            <person name="Takahashi M."/>
            <person name="Kanda K."/>
            <person name="Yokoi T."/>
            <person name="Furuya T."/>
            <person name="Kikkawa E."/>
            <person name="Omura Y."/>
            <person name="Abe K."/>
            <person name="Kamihara K."/>
            <person name="Katsuta N."/>
            <person name="Sato K."/>
            <person name="Tanikawa M."/>
            <person name="Yamazaki M."/>
            <person name="Ninomiya K."/>
            <person name="Ishibashi T."/>
            <person name="Yamashita H."/>
            <person name="Murakawa K."/>
            <person name="Fujimori K."/>
            <person name="Tanai H."/>
            <person name="Kimata M."/>
            <person name="Watanabe M."/>
            <person name="Hiraoka S."/>
            <person name="Chiba Y."/>
            <person name="Ishida S."/>
            <person name="Ono Y."/>
            <person name="Takiguchi S."/>
            <person name="Watanabe S."/>
            <person name="Yosida M."/>
            <person name="Hotuta T."/>
            <person name="Kusano J."/>
            <person name="Kanehori K."/>
            <person name="Takahashi-Fujii A."/>
            <person name="Hara H."/>
            <person name="Tanase T.-O."/>
            <person name="Nomura Y."/>
            <person name="Togiya S."/>
            <person name="Komai F."/>
            <person name="Hara R."/>
            <person name="Takeuchi K."/>
            <person name="Arita M."/>
            <person name="Imose N."/>
            <person name="Musashino K."/>
            <person name="Yuuki H."/>
            <person name="Oshima A."/>
            <person name="Sasaki N."/>
            <person name="Aotsuka S."/>
            <person name="Yoshikawa Y."/>
            <person name="Matsunawa H."/>
            <person name="Ichihara T."/>
            <person name="Shiohata N."/>
            <person name="Sano S."/>
            <person name="Moriya S."/>
            <person name="Momiyama H."/>
            <person name="Satoh N."/>
            <person name="Takami S."/>
            <person name="Terashima Y."/>
            <person name="Suzuki O."/>
            <person name="Nakagawa S."/>
            <person name="Senoh A."/>
            <person name="Mizoguchi H."/>
            <person name="Goto Y."/>
            <person name="Shimizu F."/>
            <person name="Wakebe H."/>
            <person name="Hishigaki H."/>
            <person name="Watanabe T."/>
            <person name="Sugiyama A."/>
            <person name="Takemoto M."/>
            <person name="Kawakami B."/>
            <person name="Yamazaki M."/>
            <person name="Watanabe K."/>
            <person name="Kumagai A."/>
            <person name="Itakura S."/>
            <person name="Fukuzumi Y."/>
            <person name="Fujimori Y."/>
            <person name="Komiyama M."/>
            <person name="Tashiro H."/>
            <person name="Tanigami A."/>
            <person name="Fujiwara T."/>
            <person name="Ono T."/>
            <person name="Yamada K."/>
            <person name="Fujii Y."/>
            <person name="Ozaki K."/>
            <person name="Hirao M."/>
            <person name="Ohmori Y."/>
            <person name="Kawabata A."/>
            <person name="Hikiji T."/>
            <person name="Kobatake N."/>
            <person name="Inagaki H."/>
            <person name="Ikema Y."/>
            <person name="Okamoto S."/>
            <person name="Okitani R."/>
            <person name="Kawakami T."/>
            <person name="Noguchi S."/>
            <person name="Itoh T."/>
            <person name="Shigeta K."/>
            <person name="Senba T."/>
            <person name="Matsumura K."/>
            <person name="Nakajima Y."/>
            <person name="Mizuno T."/>
            <person name="Morinaga M."/>
            <person name="Sasaki M."/>
            <person name="Togashi T."/>
            <person name="Oyama M."/>
            <person name="Hata H."/>
            <person name="Watanabe M."/>
            <person name="Komatsu T."/>
            <person name="Mizushima-Sugano J."/>
            <person name="Satoh T."/>
            <person name="Shirai Y."/>
            <person name="Takahashi Y."/>
            <person name="Nakagawa K."/>
            <person name="Okumura K."/>
            <person name="Nagase T."/>
            <person name="Nomura N."/>
            <person name="Kikuchi H."/>
            <person name="Masuho Y."/>
            <person name="Yamashita R."/>
            <person name="Nakai K."/>
            <person name="Yada T."/>
            <person name="Nakamura Y."/>
            <person name="Ohara O."/>
            <person name="Isogai T."/>
            <person name="Sugano S."/>
        </authorList>
    </citation>
    <scope>NUCLEOTIDE SEQUENCE [LARGE SCALE MRNA]</scope>
    <scope>VARIANT VAL-50</scope>
</reference>
<reference key="4">
    <citation type="journal article" date="2005" name="Nature">
        <title>Generation and annotation of the DNA sequences of human chromosomes 2 and 4.</title>
        <authorList>
            <person name="Hillier L.W."/>
            <person name="Graves T.A."/>
            <person name="Fulton R.S."/>
            <person name="Fulton L.A."/>
            <person name="Pepin K.H."/>
            <person name="Minx P."/>
            <person name="Wagner-McPherson C."/>
            <person name="Layman D."/>
            <person name="Wylie K."/>
            <person name="Sekhon M."/>
            <person name="Becker M.C."/>
            <person name="Fewell G.A."/>
            <person name="Delehaunty K.D."/>
            <person name="Miner T.L."/>
            <person name="Nash W.E."/>
            <person name="Kremitzki C."/>
            <person name="Oddy L."/>
            <person name="Du H."/>
            <person name="Sun H."/>
            <person name="Bradshaw-Cordum H."/>
            <person name="Ali J."/>
            <person name="Carter J."/>
            <person name="Cordes M."/>
            <person name="Harris A."/>
            <person name="Isak A."/>
            <person name="van Brunt A."/>
            <person name="Nguyen C."/>
            <person name="Du F."/>
            <person name="Courtney L."/>
            <person name="Kalicki J."/>
            <person name="Ozersky P."/>
            <person name="Abbott S."/>
            <person name="Armstrong J."/>
            <person name="Belter E.A."/>
            <person name="Caruso L."/>
            <person name="Cedroni M."/>
            <person name="Cotton M."/>
            <person name="Davidson T."/>
            <person name="Desai A."/>
            <person name="Elliott G."/>
            <person name="Erb T."/>
            <person name="Fronick C."/>
            <person name="Gaige T."/>
            <person name="Haakenson W."/>
            <person name="Haglund K."/>
            <person name="Holmes A."/>
            <person name="Harkins R."/>
            <person name="Kim K."/>
            <person name="Kruchowski S.S."/>
            <person name="Strong C.M."/>
            <person name="Grewal N."/>
            <person name="Goyea E."/>
            <person name="Hou S."/>
            <person name="Levy A."/>
            <person name="Martinka S."/>
            <person name="Mead K."/>
            <person name="McLellan M.D."/>
            <person name="Meyer R."/>
            <person name="Randall-Maher J."/>
            <person name="Tomlinson C."/>
            <person name="Dauphin-Kohlberg S."/>
            <person name="Kozlowicz-Reilly A."/>
            <person name="Shah N."/>
            <person name="Swearengen-Shahid S."/>
            <person name="Snider J."/>
            <person name="Strong J.T."/>
            <person name="Thompson J."/>
            <person name="Yoakum M."/>
            <person name="Leonard S."/>
            <person name="Pearman C."/>
            <person name="Trani L."/>
            <person name="Radionenko M."/>
            <person name="Waligorski J.E."/>
            <person name="Wang C."/>
            <person name="Rock S.M."/>
            <person name="Tin-Wollam A.-M."/>
            <person name="Maupin R."/>
            <person name="Latreille P."/>
            <person name="Wendl M.C."/>
            <person name="Yang S.-P."/>
            <person name="Pohl C."/>
            <person name="Wallis J.W."/>
            <person name="Spieth J."/>
            <person name="Bieri T.A."/>
            <person name="Berkowicz N."/>
            <person name="Nelson J.O."/>
            <person name="Osborne J."/>
            <person name="Ding L."/>
            <person name="Meyer R."/>
            <person name="Sabo A."/>
            <person name="Shotland Y."/>
            <person name="Sinha P."/>
            <person name="Wohldmann P.E."/>
            <person name="Cook L.L."/>
            <person name="Hickenbotham M.T."/>
            <person name="Eldred J."/>
            <person name="Williams D."/>
            <person name="Jones T.A."/>
            <person name="She X."/>
            <person name="Ciccarelli F.D."/>
            <person name="Izaurralde E."/>
            <person name="Taylor J."/>
            <person name="Schmutz J."/>
            <person name="Myers R.M."/>
            <person name="Cox D.R."/>
            <person name="Huang X."/>
            <person name="McPherson J.D."/>
            <person name="Mardis E.R."/>
            <person name="Clifton S.W."/>
            <person name="Warren W.C."/>
            <person name="Chinwalla A.T."/>
            <person name="Eddy S.R."/>
            <person name="Marra M.A."/>
            <person name="Ovcharenko I."/>
            <person name="Furey T.S."/>
            <person name="Miller W."/>
            <person name="Eichler E.E."/>
            <person name="Bork P."/>
            <person name="Suyama M."/>
            <person name="Torrents D."/>
            <person name="Waterston R.H."/>
            <person name="Wilson R.K."/>
        </authorList>
    </citation>
    <scope>NUCLEOTIDE SEQUENCE [LARGE SCALE GENOMIC DNA]</scope>
</reference>
<reference key="5">
    <citation type="journal article" date="2004" name="Genome Res.">
        <title>The status, quality, and expansion of the NIH full-length cDNA project: the Mammalian Gene Collection (MGC).</title>
        <authorList>
            <consortium name="The MGC Project Team"/>
        </authorList>
    </citation>
    <scope>NUCLEOTIDE SEQUENCE [LARGE SCALE MRNA]</scope>
</reference>
<reference key="6">
    <citation type="journal article" date="2008" name="Biochemistry">
        <title>A second disulfide bridge from the N-terminal domain to extracellular loop 2 dampens receptor activity in GPR39.</title>
        <authorList>
            <person name="Storjohann L."/>
            <person name="Holst B."/>
            <person name="Schwartz T.W."/>
        </authorList>
    </citation>
    <scope>DISULFIDE BONDS</scope>
</reference>
<reference key="7">
    <citation type="journal article" date="2008" name="FEBS Lett.">
        <title>Molecular mechanism of Zn2+ agonism in the extracellular domain of GPR39.</title>
        <authorList>
            <person name="Storjohann L."/>
            <person name="Holst B."/>
            <person name="Schwartz T.W."/>
        </authorList>
    </citation>
    <scope>ZINC-BINDING SITES</scope>
    <scope>MUTAGENESIS OF HIS-17; HIS-19; HIS-312 AND ASP-313</scope>
</reference>
<reference key="8">
    <citation type="journal article" date="2008" name="J. Biol. Chem.">
        <title>The constitutively active orphan G-protein-coupled receptor GPR39 protects from cell death by increasing secretion of pigment epithelium-derived growth factor.</title>
        <authorList>
            <person name="Dittmer S."/>
            <person name="Sahin M."/>
            <person name="Pantlen A."/>
            <person name="Saxena A."/>
            <person name="Toutzaris D."/>
            <person name="Pina A.L."/>
            <person name="Geerts A."/>
            <person name="Golz S."/>
            <person name="Methner A."/>
        </authorList>
    </citation>
    <scope>FUNCTION</scope>
</reference>
<reference key="9">
    <citation type="journal article" date="2010" name="J. Biol. Chem.">
        <title>Zinc released from injured cells is acting via the Zn2+-sensing receptor, ZnR, to trigger signaling leading to epithelial repair.</title>
        <authorList>
            <person name="Sharir H."/>
            <person name="Zinger A."/>
            <person name="Nevo A."/>
            <person name="Sekler I."/>
            <person name="Hershfinkel M."/>
        </authorList>
    </citation>
    <scope>FUNCTION</scope>
</reference>
<reference key="10">
    <citation type="journal article" date="2013" name="J. Proteome Res.">
        <title>Toward a comprehensive characterization of a human cancer cell phosphoproteome.</title>
        <authorList>
            <person name="Zhou H."/>
            <person name="Di Palma S."/>
            <person name="Preisinger C."/>
            <person name="Peng M."/>
            <person name="Polat A.N."/>
            <person name="Heck A.J."/>
            <person name="Mohammed S."/>
        </authorList>
    </citation>
    <scope>PHOSPHORYLATION [LARGE SCALE ANALYSIS] AT SER-396</scope>
    <scope>IDENTIFICATION BY MASS SPECTROMETRY [LARGE SCALE ANALYSIS]</scope>
    <source>
        <tissue>Cervix carcinoma</tissue>
    </source>
</reference>
<reference key="11">
    <citation type="journal article" date="2014" name="J. Proteomics">
        <title>An enzyme assisted RP-RPLC approach for in-depth analysis of human liver phosphoproteome.</title>
        <authorList>
            <person name="Bian Y."/>
            <person name="Song C."/>
            <person name="Cheng K."/>
            <person name="Dong M."/>
            <person name="Wang F."/>
            <person name="Huang J."/>
            <person name="Sun D."/>
            <person name="Wang L."/>
            <person name="Ye M."/>
            <person name="Zou H."/>
        </authorList>
    </citation>
    <scope>IDENTIFICATION BY MASS SPECTROMETRY [LARGE SCALE ANALYSIS]</scope>
    <source>
        <tissue>Liver</tissue>
    </source>
</reference>
<reference key="12">
    <citation type="journal article" date="2015" name="Biochim. Biophys. Acta">
        <title>The zinc binding receptor GPR39 interacts with 5-HT1A and GalR1 to form dynamic heteroreceptor complexes with signaling diversity.</title>
        <authorList>
            <person name="Tena-Campos M."/>
            <person name="Ramon E."/>
            <person name="Borroto-Escuela D.O."/>
            <person name="Fuxe K."/>
            <person name="Garriga P."/>
        </authorList>
    </citation>
    <scope>FUNCTION</scope>
    <scope>SUBCELLULAR LOCATION</scope>
    <scope>INTERACTION WITH HTR1A AND GALR1</scope>
</reference>
<feature type="chain" id="PRO_0000069565" description="G-protein coupled receptor 39">
    <location>
        <begin position="1"/>
        <end position="453"/>
    </location>
</feature>
<feature type="topological domain" description="Extracellular" evidence="1">
    <location>
        <begin position="1"/>
        <end position="34"/>
    </location>
</feature>
<feature type="transmembrane region" description="Helical; Name=1" evidence="1">
    <location>
        <begin position="35"/>
        <end position="55"/>
    </location>
</feature>
<feature type="topological domain" description="Cytoplasmic" evidence="1">
    <location>
        <begin position="56"/>
        <end position="69"/>
    </location>
</feature>
<feature type="transmembrane region" description="Helical; Name=2" evidence="1">
    <location>
        <begin position="70"/>
        <end position="89"/>
    </location>
</feature>
<feature type="topological domain" description="Extracellular" evidence="1">
    <location>
        <begin position="90"/>
        <end position="109"/>
    </location>
</feature>
<feature type="transmembrane region" description="Helical; Name=3" evidence="1">
    <location>
        <begin position="110"/>
        <end position="131"/>
    </location>
</feature>
<feature type="topological domain" description="Cytoplasmic" evidence="1">
    <location>
        <begin position="132"/>
        <end position="151"/>
    </location>
</feature>
<feature type="transmembrane region" description="Helical; Name=4" evidence="1">
    <location>
        <begin position="152"/>
        <end position="172"/>
    </location>
</feature>
<feature type="topological domain" description="Extracellular" evidence="1">
    <location>
        <begin position="173"/>
        <end position="217"/>
    </location>
</feature>
<feature type="transmembrane region" description="Helical; Name=5" evidence="1">
    <location>
        <begin position="218"/>
        <end position="242"/>
    </location>
</feature>
<feature type="topological domain" description="Cytoplasmic" evidence="1">
    <location>
        <begin position="243"/>
        <end position="283"/>
    </location>
</feature>
<feature type="transmembrane region" description="Helical; Name=6" evidence="1">
    <location>
        <begin position="284"/>
        <end position="305"/>
    </location>
</feature>
<feature type="topological domain" description="Extracellular" evidence="1">
    <location>
        <begin position="306"/>
        <end position="323"/>
    </location>
</feature>
<feature type="transmembrane region" description="Helical; Name=7" evidence="1">
    <location>
        <begin position="324"/>
        <end position="344"/>
    </location>
</feature>
<feature type="topological domain" description="Cytoplasmic" evidence="1">
    <location>
        <begin position="345"/>
        <end position="453"/>
    </location>
</feature>
<feature type="region of interest" description="Disordered" evidence="5">
    <location>
        <begin position="255"/>
        <end position="274"/>
    </location>
</feature>
<feature type="region of interest" description="Disordered" evidence="5">
    <location>
        <begin position="415"/>
        <end position="453"/>
    </location>
</feature>
<feature type="compositionally biased region" description="Low complexity" evidence="5">
    <location>
        <begin position="418"/>
        <end position="435"/>
    </location>
</feature>
<feature type="binding site" evidence="8">
    <location>
        <position position="17"/>
    </location>
    <ligand>
        <name>Zn(2+)</name>
        <dbReference type="ChEBI" id="CHEBI:29105"/>
    </ligand>
</feature>
<feature type="binding site" evidence="8">
    <location>
        <position position="19"/>
    </location>
    <ligand>
        <name>Zn(2+)</name>
        <dbReference type="ChEBI" id="CHEBI:29105"/>
    </ligand>
</feature>
<feature type="modified residue" description="Phosphoserine" evidence="13">
    <location>
        <position position="396"/>
    </location>
</feature>
<feature type="glycosylation site" description="N-linked (GlcNAc...) asparagine" evidence="3">
    <location>
        <position position="192"/>
    </location>
</feature>
<feature type="glycosylation site" description="N-linked (GlcNAc...) asparagine" evidence="3">
    <location>
        <position position="206"/>
    </location>
</feature>
<feature type="glycosylation site" description="N-linked (GlcNAc...) asparagine" evidence="3">
    <location>
        <position position="212"/>
    </location>
</feature>
<feature type="disulfide bond" evidence="4 9">
    <location>
        <begin position="11"/>
        <end position="191"/>
    </location>
</feature>
<feature type="disulfide bond" evidence="4 9">
    <location>
        <begin position="108"/>
        <end position="210"/>
    </location>
</feature>
<feature type="sequence variant" id="VAR_022067" description="In dbSNP:rs2241764." evidence="6">
    <original>A</original>
    <variation>V</variation>
    <location>
        <position position="50"/>
    </location>
</feature>
<feature type="sequence variant" id="VAR_049393" description="In dbSNP:rs16838944.">
    <original>R</original>
    <variation>C</variation>
    <location>
        <position position="390"/>
    </location>
</feature>
<feature type="mutagenesis site" description="Decreases activation by Zn(2+). Abolishes activation by Zn(2+); when associated with A-19." evidence="8">
    <original>H</original>
    <variation>A</variation>
    <location>
        <position position="17"/>
    </location>
</feature>
<feature type="mutagenesis site" description="Decreases activation by Zn(2+). Abolishes activation by Zn(2+); when associated with A-17." evidence="8">
    <original>H</original>
    <variation>A</variation>
    <location>
        <position position="19"/>
    </location>
</feature>
<feature type="mutagenesis site" description="Not affect constitutive or Zn(2+)-induced activation." evidence="8">
    <original>H</original>
    <variation>A</variation>
    <location>
        <position position="312"/>
    </location>
</feature>
<feature type="mutagenesis site" description="Induces very high constitutive activity and eliminates Zn(2+)-induced activation." evidence="8">
    <original>D</original>
    <variation>A</variation>
    <location>
        <position position="313"/>
    </location>
</feature>
<accession>O43194</accession>
<accession>B2RC12</accession>
<accession>B6V9G4</accession>
<accession>Q08AS2</accession>
<accession>Q53R01</accession>
<gene>
    <name type="primary">GPR39</name>
</gene>
<name>GPR39_HUMAN</name>
<dbReference type="EMBL" id="AF034633">
    <property type="protein sequence ID" value="AAC26082.1"/>
    <property type="molecule type" value="mRNA"/>
</dbReference>
<dbReference type="EMBL" id="FJ348258">
    <property type="protein sequence ID" value="ACI96302.1"/>
    <property type="molecule type" value="mRNA"/>
</dbReference>
<dbReference type="EMBL" id="AK314895">
    <property type="protein sequence ID" value="BAG37409.1"/>
    <property type="molecule type" value="mRNA"/>
</dbReference>
<dbReference type="EMBL" id="AC098800">
    <property type="protein sequence ID" value="AAY24154.1"/>
    <property type="molecule type" value="Genomic_DNA"/>
</dbReference>
<dbReference type="EMBL" id="AC079773">
    <property type="status" value="NOT_ANNOTATED_CDS"/>
    <property type="molecule type" value="Genomic_DNA"/>
</dbReference>
<dbReference type="EMBL" id="BC125046">
    <property type="protein sequence ID" value="AAI25047.1"/>
    <property type="molecule type" value="mRNA"/>
</dbReference>
<dbReference type="CCDS" id="CCDS2170.1"/>
<dbReference type="RefSeq" id="NP_001499.1">
    <property type="nucleotide sequence ID" value="NM_001508.3"/>
</dbReference>
<dbReference type="SMR" id="O43194"/>
<dbReference type="BioGRID" id="109121">
    <property type="interactions" value="4"/>
</dbReference>
<dbReference type="CORUM" id="O43194"/>
<dbReference type="FunCoup" id="O43194">
    <property type="interactions" value="841"/>
</dbReference>
<dbReference type="IntAct" id="O43194">
    <property type="interactions" value="4"/>
</dbReference>
<dbReference type="MINT" id="O43194"/>
<dbReference type="STRING" id="9606.ENSP00000327417"/>
<dbReference type="BindingDB" id="O43194"/>
<dbReference type="ChEMBL" id="CHEMBL3091266"/>
<dbReference type="DrugCentral" id="O43194"/>
<dbReference type="GuidetoPHARMACOLOGY" id="105"/>
<dbReference type="TCDB" id="9.A.14.1.15">
    <property type="family name" value="the g-protein-coupled receptor (gpcr) family"/>
</dbReference>
<dbReference type="GlyCosmos" id="O43194">
    <property type="glycosylation" value="3 sites, No reported glycans"/>
</dbReference>
<dbReference type="GlyGen" id="O43194">
    <property type="glycosylation" value="3 sites"/>
</dbReference>
<dbReference type="iPTMnet" id="O43194"/>
<dbReference type="PhosphoSitePlus" id="O43194"/>
<dbReference type="SwissPalm" id="O43194"/>
<dbReference type="BioMuta" id="GPR39"/>
<dbReference type="jPOST" id="O43194"/>
<dbReference type="MassIVE" id="O43194"/>
<dbReference type="PaxDb" id="9606-ENSP00000327417"/>
<dbReference type="PeptideAtlas" id="O43194"/>
<dbReference type="ProteomicsDB" id="48809"/>
<dbReference type="Antibodypedia" id="18657">
    <property type="antibodies" value="362 antibodies from 33 providers"/>
</dbReference>
<dbReference type="DNASU" id="2863"/>
<dbReference type="Ensembl" id="ENST00000329321.4">
    <property type="protein sequence ID" value="ENSP00000327417.3"/>
    <property type="gene ID" value="ENSG00000183840.8"/>
</dbReference>
<dbReference type="GeneID" id="2863"/>
<dbReference type="KEGG" id="hsa:2863"/>
<dbReference type="MANE-Select" id="ENST00000329321.4">
    <property type="protein sequence ID" value="ENSP00000327417.3"/>
    <property type="RefSeq nucleotide sequence ID" value="NM_001508.3"/>
    <property type="RefSeq protein sequence ID" value="NP_001499.1"/>
</dbReference>
<dbReference type="UCSC" id="uc002ttl.4">
    <property type="organism name" value="human"/>
</dbReference>
<dbReference type="AGR" id="HGNC:4496"/>
<dbReference type="CTD" id="2863"/>
<dbReference type="DisGeNET" id="2863"/>
<dbReference type="GeneCards" id="GPR39"/>
<dbReference type="HGNC" id="HGNC:4496">
    <property type="gene designation" value="GPR39"/>
</dbReference>
<dbReference type="HPA" id="ENSG00000183840">
    <property type="expression patterns" value="Tissue enhanced (intestine)"/>
</dbReference>
<dbReference type="MIM" id="602886">
    <property type="type" value="gene"/>
</dbReference>
<dbReference type="neXtProt" id="NX_O43194"/>
<dbReference type="OpenTargets" id="ENSG00000183840"/>
<dbReference type="PharmGKB" id="PA28885"/>
<dbReference type="VEuPathDB" id="HostDB:ENSG00000183840"/>
<dbReference type="eggNOG" id="KOG3656">
    <property type="taxonomic scope" value="Eukaryota"/>
</dbReference>
<dbReference type="GeneTree" id="ENSGT01120000271823"/>
<dbReference type="HOGENOM" id="CLU_009579_6_5_1"/>
<dbReference type="InParanoid" id="O43194"/>
<dbReference type="OMA" id="HNMTICT"/>
<dbReference type="OrthoDB" id="6088609at2759"/>
<dbReference type="PAN-GO" id="O43194">
    <property type="GO annotations" value="2 GO annotations based on evolutionary models"/>
</dbReference>
<dbReference type="PhylomeDB" id="O43194"/>
<dbReference type="TreeFam" id="TF331140"/>
<dbReference type="PathwayCommons" id="O43194"/>
<dbReference type="Reactome" id="R-HSA-373076">
    <property type="pathway name" value="Class A/1 (Rhodopsin-like receptors)"/>
</dbReference>
<dbReference type="Reactome" id="R-HSA-416476">
    <property type="pathway name" value="G alpha (q) signalling events"/>
</dbReference>
<dbReference type="Reactome" id="R-HSA-418555">
    <property type="pathway name" value="G alpha (s) signalling events"/>
</dbReference>
<dbReference type="SignaLink" id="O43194"/>
<dbReference type="BioGRID-ORCS" id="2863">
    <property type="hits" value="10 hits in 1144 CRISPR screens"/>
</dbReference>
<dbReference type="ChiTaRS" id="GPR39">
    <property type="organism name" value="human"/>
</dbReference>
<dbReference type="GeneWiki" id="GPR39"/>
<dbReference type="GenomeRNAi" id="2863"/>
<dbReference type="Pharos" id="O43194">
    <property type="development level" value="Tchem"/>
</dbReference>
<dbReference type="PRO" id="PR:O43194"/>
<dbReference type="Proteomes" id="UP000005640">
    <property type="component" value="Chromosome 2"/>
</dbReference>
<dbReference type="RNAct" id="O43194">
    <property type="molecule type" value="protein"/>
</dbReference>
<dbReference type="Bgee" id="ENSG00000183840">
    <property type="expression patterns" value="Expressed in oocyte and 135 other cell types or tissues"/>
</dbReference>
<dbReference type="ExpressionAtlas" id="O43194">
    <property type="expression patterns" value="baseline and differential"/>
</dbReference>
<dbReference type="GO" id="GO:0005886">
    <property type="term" value="C:plasma membrane"/>
    <property type="evidence" value="ECO:0000304"/>
    <property type="project" value="Reactome"/>
</dbReference>
<dbReference type="GO" id="GO:0004930">
    <property type="term" value="F:G protein-coupled receptor activity"/>
    <property type="evidence" value="ECO:0000318"/>
    <property type="project" value="GO_Central"/>
</dbReference>
<dbReference type="GO" id="GO:0046872">
    <property type="term" value="F:metal ion binding"/>
    <property type="evidence" value="ECO:0007669"/>
    <property type="project" value="UniProtKB-KW"/>
</dbReference>
<dbReference type="GO" id="GO:0007186">
    <property type="term" value="P:G protein-coupled receptor signaling pathway"/>
    <property type="evidence" value="ECO:0000318"/>
    <property type="project" value="GO_Central"/>
</dbReference>
<dbReference type="CDD" id="cd15135">
    <property type="entry name" value="7tmA_GPR39"/>
    <property type="match status" value="1"/>
</dbReference>
<dbReference type="FunFam" id="1.20.1070.10:FF:000302">
    <property type="entry name" value="G protein-coupled receptor 39"/>
    <property type="match status" value="1"/>
</dbReference>
<dbReference type="Gene3D" id="1.20.1070.10">
    <property type="entry name" value="Rhodopsin 7-helix transmembrane proteins"/>
    <property type="match status" value="1"/>
</dbReference>
<dbReference type="InterPro" id="IPR000276">
    <property type="entry name" value="GPCR_Rhodpsn"/>
</dbReference>
<dbReference type="InterPro" id="IPR017452">
    <property type="entry name" value="GPCR_Rhodpsn_7TM"/>
</dbReference>
<dbReference type="InterPro" id="IPR052676">
    <property type="entry name" value="Zinc-sensing_GPCR"/>
</dbReference>
<dbReference type="PANTHER" id="PTHR46752">
    <property type="entry name" value="G-PROTEIN COUPLED RECEPTOR 39"/>
    <property type="match status" value="1"/>
</dbReference>
<dbReference type="PANTHER" id="PTHR46752:SF1">
    <property type="entry name" value="G-PROTEIN COUPLED RECEPTOR 39"/>
    <property type="match status" value="1"/>
</dbReference>
<dbReference type="Pfam" id="PF00001">
    <property type="entry name" value="7tm_1"/>
    <property type="match status" value="1"/>
</dbReference>
<dbReference type="PRINTS" id="PR00237">
    <property type="entry name" value="GPCRRHODOPSN"/>
</dbReference>
<dbReference type="SUPFAM" id="SSF81321">
    <property type="entry name" value="Family A G protein-coupled receptor-like"/>
    <property type="match status" value="1"/>
</dbReference>
<dbReference type="PROSITE" id="PS00237">
    <property type="entry name" value="G_PROTEIN_RECEP_F1_1"/>
    <property type="match status" value="1"/>
</dbReference>
<dbReference type="PROSITE" id="PS50262">
    <property type="entry name" value="G_PROTEIN_RECEP_F1_2"/>
    <property type="match status" value="1"/>
</dbReference>
<sequence length="453" mass="51329">MASPSLPGSDCSQIIDHSHVPEFEVATWIKITLILVYLIIFVMGLLGNSATIRVTQVLQKKGYLQKEVTDHMVSLACSDILVFLIGMPMEFYSIIWNPLTTSSYTLSCKLHTFLFEACSYATLLHVLTLSFERYIAICHPFRYKAVSGPCQVKLLIGFVWVTSALVALPLLFAMGTEYPLVNVPSHRGLTCNRSSTRHHEQPETSNMSICTNLSSRWTVFQSSIFGAFVVYLVVLLSVAFMCWNMMQVLMKSQKGSLAGGTRPPQLRKSESEESRTARRQTIIFLRLIVVTLAVCWMPNQIRRIMAAAKPKHDWTRSYFRAYMILLPFSETFFYLSSVINPLLYTVSSQQFRRVFVQVLCCRLSLQHANHEKRLRVHAHSTTDSARFVQRPLLFASRRQSSARRTEKIFLSTFQSEAEPQSKSQSLSLESLEPNSGAKPANSAAENGFQEHEV</sequence>